<evidence type="ECO:0000255" key="1"/>
<evidence type="ECO:0000256" key="2">
    <source>
        <dbReference type="SAM" id="MobiDB-lite"/>
    </source>
</evidence>
<evidence type="ECO:0000269" key="3">
    <source>
    </source>
</evidence>
<evidence type="ECO:0000303" key="4">
    <source>
    </source>
</evidence>
<evidence type="ECO:0000305" key="5"/>
<evidence type="ECO:0000305" key="6">
    <source>
    </source>
</evidence>
<reference key="1">
    <citation type="journal article" date="2015" name="PLoS ONE">
        <title>Novel mitochondria-targeted heat-soluble proteins identified in the anhydrobiotic Tardigrade improve osmotic tolerance of human cells.</title>
        <authorList>
            <person name="Tanaka S."/>
            <person name="Tanaka J."/>
            <person name="Miwa Y."/>
            <person name="Horikawa D.D."/>
            <person name="Katayama T."/>
            <person name="Arakawa K."/>
            <person name="Toyoda A."/>
            <person name="Kubo T."/>
            <person name="Kunieda T."/>
        </authorList>
    </citation>
    <scope>NUCLEOTIDE SEQUENCE [MRNA]</scope>
    <scope>FUNCTION</scope>
    <scope>SUBCELLULAR LOCATION</scope>
    <scope>DOMAIN</scope>
    <source>
        <strain>YOKOZUNA-1</strain>
    </source>
</reference>
<reference key="2">
    <citation type="journal article" date="2016" name="Nat. Commun.">
        <title>Extremotolerant tardigrade genome and improved radiotolerance of human cultured cells by tardigrade-unique protein.</title>
        <authorList>
            <person name="Hashimoto T."/>
            <person name="Horikawa D.D."/>
            <person name="Saito Y."/>
            <person name="Kuwahara H."/>
            <person name="Kozuka-Hata H."/>
            <person name="Shin-I T."/>
            <person name="Minakuchi Y."/>
            <person name="Ohishi K."/>
            <person name="Motoyama A."/>
            <person name="Aizu T."/>
            <person name="Enomoto A."/>
            <person name="Kondo K."/>
            <person name="Tanaka S."/>
            <person name="Hara Y."/>
            <person name="Koshikawa S."/>
            <person name="Sagara H."/>
            <person name="Miura T."/>
            <person name="Yokobori S."/>
            <person name="Miyagawa K."/>
            <person name="Suzuki Y."/>
            <person name="Kubo T."/>
            <person name="Oyama M."/>
            <person name="Kohara Y."/>
            <person name="Fujiyama A."/>
            <person name="Arakawa K."/>
            <person name="Katayama T."/>
            <person name="Toyoda A."/>
            <person name="Kunieda T."/>
        </authorList>
    </citation>
    <scope>NUCLEOTIDE SEQUENCE [LARGE SCALE GENOMIC DNA]</scope>
    <source>
        <strain>YOKOZUNA-1</strain>
    </source>
</reference>
<name>LEAM_RAMVA</name>
<dbReference type="EMBL" id="LC002821">
    <property type="protein sequence ID" value="BAQ94586.1"/>
    <property type="molecule type" value="mRNA"/>
</dbReference>
<dbReference type="EMBL" id="BDGG01000011">
    <property type="protein sequence ID" value="GAV04799.1"/>
    <property type="molecule type" value="Genomic_DNA"/>
</dbReference>
<dbReference type="STRING" id="947166.A0A0E4AVP3"/>
<dbReference type="OrthoDB" id="5838520at2759"/>
<dbReference type="Proteomes" id="UP000186922">
    <property type="component" value="Unassembled WGS sequence"/>
</dbReference>
<dbReference type="GO" id="GO:0005739">
    <property type="term" value="C:mitochondrion"/>
    <property type="evidence" value="ECO:0007669"/>
    <property type="project" value="UniProtKB-SubCell"/>
</dbReference>
<dbReference type="Gene3D" id="1.20.120.20">
    <property type="entry name" value="Apolipoprotein"/>
    <property type="match status" value="1"/>
</dbReference>
<organism>
    <name type="scientific">Ramazzottius varieornatus</name>
    <name type="common">Water bear</name>
    <name type="synonym">Tardigrade</name>
    <dbReference type="NCBI Taxonomy" id="947166"/>
    <lineage>
        <taxon>Eukaryota</taxon>
        <taxon>Metazoa</taxon>
        <taxon>Ecdysozoa</taxon>
        <taxon>Tardigrada</taxon>
        <taxon>Eutardigrada</taxon>
        <taxon>Parachela</taxon>
        <taxon>Hypsibioidea</taxon>
        <taxon>Ramazzottiidae</taxon>
        <taxon>Ramazzottius</taxon>
    </lineage>
</organism>
<gene>
    <name evidence="4" type="primary">RvLEAM</name>
    <name type="ORF">RvY_15023</name>
</gene>
<feature type="transit peptide" description="Mitochondrion" evidence="1">
    <location>
        <begin position="1"/>
        <end position="31"/>
    </location>
</feature>
<feature type="chain" id="PRO_0000440201" description="Group 3 late-embryogenesis abundant protein, mitochondrial">
    <location>
        <begin position="32"/>
        <end position="293"/>
    </location>
</feature>
<feature type="repeat" description="LEA 11-mer repeat 1" evidence="6">
    <location>
        <begin position="58"/>
        <end position="68"/>
    </location>
</feature>
<feature type="repeat" description="LEA 11-mer repeat 2" evidence="6">
    <location>
        <begin position="83"/>
        <end position="93"/>
    </location>
</feature>
<feature type="repeat" description="LEA 11-mer repeat 3" evidence="6">
    <location>
        <begin position="123"/>
        <end position="133"/>
    </location>
</feature>
<feature type="repeat" description="LEA 11-mer repeat 4" evidence="6">
    <location>
        <begin position="134"/>
        <end position="144"/>
    </location>
</feature>
<feature type="repeat" description="LEA 11-mer repeat 5" evidence="6">
    <location>
        <begin position="145"/>
        <end position="155"/>
    </location>
</feature>
<feature type="repeat" description="LEA 11-mer repeat 6" evidence="6">
    <location>
        <begin position="160"/>
        <end position="170"/>
    </location>
</feature>
<feature type="repeat" description="LEA 11-mer repeat 7" evidence="6">
    <location>
        <begin position="171"/>
        <end position="181"/>
    </location>
</feature>
<feature type="repeat" description="LEA 11-mer repeat 8" evidence="6">
    <location>
        <begin position="199"/>
        <end position="209"/>
    </location>
</feature>
<feature type="repeat" description="LEA 11-mer repeat 9" evidence="6">
    <location>
        <begin position="210"/>
        <end position="220"/>
    </location>
</feature>
<feature type="region of interest" description="Disordered" evidence="2">
    <location>
        <begin position="27"/>
        <end position="52"/>
    </location>
</feature>
<feature type="region of interest" description="Disordered" evidence="2">
    <location>
        <begin position="217"/>
        <end position="293"/>
    </location>
</feature>
<feature type="compositionally biased region" description="Low complexity" evidence="2">
    <location>
        <begin position="27"/>
        <end position="43"/>
    </location>
</feature>
<feature type="compositionally biased region" description="Low complexity" evidence="2">
    <location>
        <begin position="230"/>
        <end position="265"/>
    </location>
</feature>
<feature type="compositionally biased region" description="Gly residues" evidence="2">
    <location>
        <begin position="279"/>
        <end position="293"/>
    </location>
</feature>
<accession>A0A0E4AVP3</accession>
<proteinExistence type="evidence at transcript level"/>
<protein>
    <recommendedName>
        <fullName evidence="4">Group 3 late-embryogenesis abundant protein, mitochondrial</fullName>
        <shortName evidence="4">LEAM</shortName>
    </recommendedName>
</protein>
<comment type="function">
    <text evidence="3">Mitochondrial heat soluble protein acting as a molecular shield in water-deficient condition.</text>
</comment>
<comment type="subcellular location">
    <subcellularLocation>
        <location evidence="3">Mitochondrion</location>
    </subcellularLocation>
</comment>
<comment type="domain">
    <text evidence="6">Contiguous repeats of the 11-mer LEA motif is characteristic of group 3 LEA proteins and form an amphipathic helical structure under water-deficient conditions (PubMed:25675104).</text>
</comment>
<comment type="miscellaneous">
    <text evidence="3">Improves osmotic tolerance of human cells (PubMed:25675104).</text>
</comment>
<comment type="similarity">
    <text evidence="5">Belongs to the LEA type 4 family.</text>
</comment>
<sequence>MFLARNAGRAGYRGVVAYQQAASFSVSSAKAAGSRSSGGSDAGDYAREAAEHAKAGLKDLKNEASWKAKGVANQAAGAFERAKDTVKEGVHDMKRSGSRVFEQGQEEVEAGAQHAKAGYQSAKNAAQDTAATLKDKAGSAWNQAKHVVEDKGEDVVEAVKDTASKVWGKAKHVAEDVKENAQSPGGIADKASDVWSAAKDKAADVLSGAKHTAENLAHKAQAAIHDATASSGSQSQSQSQSQYRQGQQQGRQDQQQSKSQWGQTSPQSPDGFRPQAGQGPQGGKGPGQAGGRR</sequence>
<keyword id="KW-0496">Mitochondrion</keyword>
<keyword id="KW-1185">Reference proteome</keyword>
<keyword id="KW-0677">Repeat</keyword>
<keyword id="KW-0346">Stress response</keyword>
<keyword id="KW-0809">Transit peptide</keyword>